<accession>Q4ZS10</accession>
<feature type="chain" id="PRO_0000257107" description="Probable transcriptional regulatory protein Psyr_3028">
    <location>
        <begin position="1"/>
        <end position="234"/>
    </location>
</feature>
<name>Y3028_PSEU2</name>
<sequence length="234" mass="25292">MGAQWKVKHKEAAANAKGRTFGKLSKEIMIAARAGADPDMNSRLRLVVEQAKKASMPRETLERAIKKGAGLLGESVNFERLTYEGFAPHRVPVIVECLTDNINRTVSEIRVLFRKGQLGAAGSVSWDFLYQGMIEAVPAAADADPELAAIEAGAQDFEPGEEGATLFLTESTDMDAVCKALPEFGFTVQSAQLGYRPKSTVDGLTDEQMAEVEAFLEAIDNHDDVQNVYVGLAG</sequence>
<keyword id="KW-0963">Cytoplasm</keyword>
<keyword id="KW-0238">DNA-binding</keyword>
<keyword id="KW-0804">Transcription</keyword>
<keyword id="KW-0805">Transcription regulation</keyword>
<gene>
    <name type="ordered locus">Psyr_3028</name>
</gene>
<reference key="1">
    <citation type="journal article" date="2005" name="Proc. Natl. Acad. Sci. U.S.A.">
        <title>Comparison of the complete genome sequences of Pseudomonas syringae pv. syringae B728a and pv. tomato DC3000.</title>
        <authorList>
            <person name="Feil H."/>
            <person name="Feil W.S."/>
            <person name="Chain P."/>
            <person name="Larimer F."/>
            <person name="Dibartolo G."/>
            <person name="Copeland A."/>
            <person name="Lykidis A."/>
            <person name="Trong S."/>
            <person name="Nolan M."/>
            <person name="Goltsman E."/>
            <person name="Thiel J."/>
            <person name="Malfatti S."/>
            <person name="Loper J.E."/>
            <person name="Lapidus A."/>
            <person name="Detter J.C."/>
            <person name="Land M."/>
            <person name="Richardson P.M."/>
            <person name="Kyrpides N.C."/>
            <person name="Ivanova N."/>
            <person name="Lindow S.E."/>
        </authorList>
    </citation>
    <scope>NUCLEOTIDE SEQUENCE [LARGE SCALE GENOMIC DNA]</scope>
    <source>
        <strain>B728a</strain>
    </source>
</reference>
<organism>
    <name type="scientific">Pseudomonas syringae pv. syringae (strain B728a)</name>
    <dbReference type="NCBI Taxonomy" id="205918"/>
    <lineage>
        <taxon>Bacteria</taxon>
        <taxon>Pseudomonadati</taxon>
        <taxon>Pseudomonadota</taxon>
        <taxon>Gammaproteobacteria</taxon>
        <taxon>Pseudomonadales</taxon>
        <taxon>Pseudomonadaceae</taxon>
        <taxon>Pseudomonas</taxon>
        <taxon>Pseudomonas syringae</taxon>
    </lineage>
</organism>
<evidence type="ECO:0000255" key="1">
    <source>
        <dbReference type="HAMAP-Rule" id="MF_00693"/>
    </source>
</evidence>
<protein>
    <recommendedName>
        <fullName evidence="1">Probable transcriptional regulatory protein Psyr_3028</fullName>
    </recommendedName>
</protein>
<dbReference type="EMBL" id="CP000075">
    <property type="protein sequence ID" value="AAY38062.1"/>
    <property type="molecule type" value="Genomic_DNA"/>
</dbReference>
<dbReference type="RefSeq" id="WP_003364547.1">
    <property type="nucleotide sequence ID" value="NC_007005.1"/>
</dbReference>
<dbReference type="RefSeq" id="YP_236100.1">
    <property type="nucleotide sequence ID" value="NC_007005.1"/>
</dbReference>
<dbReference type="SMR" id="Q4ZS10"/>
<dbReference type="STRING" id="205918.Psyr_3028"/>
<dbReference type="KEGG" id="psb:Psyr_3028"/>
<dbReference type="PATRIC" id="fig|205918.7.peg.3089"/>
<dbReference type="eggNOG" id="COG0217">
    <property type="taxonomic scope" value="Bacteria"/>
</dbReference>
<dbReference type="HOGENOM" id="CLU_062974_2_2_6"/>
<dbReference type="OrthoDB" id="9781053at2"/>
<dbReference type="Proteomes" id="UP000000426">
    <property type="component" value="Chromosome"/>
</dbReference>
<dbReference type="GO" id="GO:0005737">
    <property type="term" value="C:cytoplasm"/>
    <property type="evidence" value="ECO:0007669"/>
    <property type="project" value="UniProtKB-SubCell"/>
</dbReference>
<dbReference type="GO" id="GO:0003677">
    <property type="term" value="F:DNA binding"/>
    <property type="evidence" value="ECO:0007669"/>
    <property type="project" value="UniProtKB-UniRule"/>
</dbReference>
<dbReference type="GO" id="GO:0006355">
    <property type="term" value="P:regulation of DNA-templated transcription"/>
    <property type="evidence" value="ECO:0007669"/>
    <property type="project" value="UniProtKB-UniRule"/>
</dbReference>
<dbReference type="Gene3D" id="1.10.10.200">
    <property type="match status" value="1"/>
</dbReference>
<dbReference type="Gene3D" id="3.30.70.980">
    <property type="match status" value="2"/>
</dbReference>
<dbReference type="HAMAP" id="MF_00693">
    <property type="entry name" value="Transcrip_reg_TACO1"/>
    <property type="match status" value="1"/>
</dbReference>
<dbReference type="InterPro" id="IPR017856">
    <property type="entry name" value="Integrase-like_N"/>
</dbReference>
<dbReference type="InterPro" id="IPR048300">
    <property type="entry name" value="TACO1_YebC-like_2nd/3rd_dom"/>
</dbReference>
<dbReference type="InterPro" id="IPR049083">
    <property type="entry name" value="TACO1_YebC_N"/>
</dbReference>
<dbReference type="InterPro" id="IPR002876">
    <property type="entry name" value="Transcrip_reg_TACO1-like"/>
</dbReference>
<dbReference type="InterPro" id="IPR026564">
    <property type="entry name" value="Transcrip_reg_TACO1-like_dom3"/>
</dbReference>
<dbReference type="InterPro" id="IPR029072">
    <property type="entry name" value="YebC-like"/>
</dbReference>
<dbReference type="NCBIfam" id="NF009044">
    <property type="entry name" value="PRK12378.1"/>
    <property type="match status" value="1"/>
</dbReference>
<dbReference type="PANTHER" id="PTHR12532">
    <property type="entry name" value="TRANSLATIONAL ACTIVATOR OF CYTOCHROME C OXIDASE 1"/>
    <property type="match status" value="1"/>
</dbReference>
<dbReference type="PANTHER" id="PTHR12532:SF0">
    <property type="entry name" value="TRANSLATIONAL ACTIVATOR OF CYTOCHROME C OXIDASE 1"/>
    <property type="match status" value="1"/>
</dbReference>
<dbReference type="Pfam" id="PF20772">
    <property type="entry name" value="TACO1_YebC_N"/>
    <property type="match status" value="1"/>
</dbReference>
<dbReference type="Pfam" id="PF01709">
    <property type="entry name" value="Transcrip_reg"/>
    <property type="match status" value="1"/>
</dbReference>
<dbReference type="SUPFAM" id="SSF75625">
    <property type="entry name" value="YebC-like"/>
    <property type="match status" value="1"/>
</dbReference>
<proteinExistence type="inferred from homology"/>
<comment type="subcellular location">
    <subcellularLocation>
        <location evidence="1">Cytoplasm</location>
    </subcellularLocation>
</comment>
<comment type="similarity">
    <text evidence="1">Belongs to the TACO1 family.</text>
</comment>